<dbReference type="EMBL" id="AC006072">
    <property type="protein sequence ID" value="AAD13710.2"/>
    <property type="molecule type" value="Genomic_DNA"/>
</dbReference>
<dbReference type="EMBL" id="CP002685">
    <property type="protein sequence ID" value="AEC10928.1"/>
    <property type="molecule type" value="Genomic_DNA"/>
</dbReference>
<dbReference type="EMBL" id="CP002685">
    <property type="protein sequence ID" value="AEC10929.1"/>
    <property type="molecule type" value="Genomic_DNA"/>
</dbReference>
<dbReference type="EMBL" id="AY045783">
    <property type="protein sequence ID" value="AAK76457.1"/>
    <property type="molecule type" value="mRNA"/>
</dbReference>
<dbReference type="EMBL" id="AY079358">
    <property type="protein sequence ID" value="AAL85089.1"/>
    <property type="molecule type" value="mRNA"/>
</dbReference>
<dbReference type="PIR" id="A84923">
    <property type="entry name" value="A84923"/>
</dbReference>
<dbReference type="RefSeq" id="NP_566122.1">
    <property type="nucleotide sequence ID" value="NM_130374.4"/>
</dbReference>
<dbReference type="RefSeq" id="NP_850484.1">
    <property type="nucleotide sequence ID" value="NM_180153.2"/>
</dbReference>
<dbReference type="FunCoup" id="Q9ZU82">
    <property type="interactions" value="1606"/>
</dbReference>
<dbReference type="IntAct" id="Q9ZU82">
    <property type="interactions" value="1"/>
</dbReference>
<dbReference type="STRING" id="3702.Q9ZU82"/>
<dbReference type="PaxDb" id="3702-AT2G48070.3"/>
<dbReference type="ProteomicsDB" id="227963"/>
<dbReference type="EnsemblPlants" id="AT2G48070.1">
    <property type="protein sequence ID" value="AT2G48070.1"/>
    <property type="gene ID" value="AT2G48070"/>
</dbReference>
<dbReference type="EnsemblPlants" id="AT2G48070.2">
    <property type="protein sequence ID" value="AT2G48070.2"/>
    <property type="gene ID" value="AT2G48070"/>
</dbReference>
<dbReference type="GeneID" id="819419"/>
<dbReference type="Gramene" id="AT2G48070.1">
    <property type="protein sequence ID" value="AT2G48070.1"/>
    <property type="gene ID" value="AT2G48070"/>
</dbReference>
<dbReference type="Gramene" id="AT2G48070.2">
    <property type="protein sequence ID" value="AT2G48070.2"/>
    <property type="gene ID" value="AT2G48070"/>
</dbReference>
<dbReference type="KEGG" id="ath:AT2G48070"/>
<dbReference type="Araport" id="AT2G48070"/>
<dbReference type="TAIR" id="AT2G48070">
    <property type="gene designation" value="RPH1"/>
</dbReference>
<dbReference type="HOGENOM" id="CLU_106462_0_0_1"/>
<dbReference type="InParanoid" id="Q9ZU82"/>
<dbReference type="OrthoDB" id="424372at2759"/>
<dbReference type="PhylomeDB" id="Q9ZU82"/>
<dbReference type="PRO" id="PR:Q9ZU82"/>
<dbReference type="Proteomes" id="UP000006548">
    <property type="component" value="Chromosome 2"/>
</dbReference>
<dbReference type="ExpressionAtlas" id="Q9ZU82">
    <property type="expression patterns" value="baseline and differential"/>
</dbReference>
<dbReference type="GO" id="GO:0009507">
    <property type="term" value="C:chloroplast"/>
    <property type="evidence" value="ECO:0000314"/>
    <property type="project" value="UniProtKB"/>
</dbReference>
<dbReference type="GO" id="GO:0016020">
    <property type="term" value="C:membrane"/>
    <property type="evidence" value="ECO:0007669"/>
    <property type="project" value="UniProtKB-SubCell"/>
</dbReference>
<dbReference type="GO" id="GO:0006952">
    <property type="term" value="P:defense response"/>
    <property type="evidence" value="ECO:0007669"/>
    <property type="project" value="UniProtKB-KW"/>
</dbReference>
<dbReference type="GO" id="GO:0050665">
    <property type="term" value="P:hydrogen peroxide biosynthetic process"/>
    <property type="evidence" value="ECO:0000315"/>
    <property type="project" value="UniProtKB"/>
</dbReference>
<dbReference type="GO" id="GO:1902290">
    <property type="term" value="P:positive regulation of defense response to oomycetes"/>
    <property type="evidence" value="ECO:0000315"/>
    <property type="project" value="UniProtKB"/>
</dbReference>
<dbReference type="InterPro" id="IPR044966">
    <property type="entry name" value="RPH1"/>
</dbReference>
<dbReference type="PANTHER" id="PTHR36359">
    <property type="entry name" value="PROTEIN RESISTANCE TO PHYTOPHTHORA 1, CHLOROPLASTIC"/>
    <property type="match status" value="1"/>
</dbReference>
<dbReference type="PANTHER" id="PTHR36359:SF1">
    <property type="entry name" value="PROTEIN RESISTANCE TO PHYTOPHTHORA 1, CHLOROPLASTIC"/>
    <property type="match status" value="1"/>
</dbReference>
<gene>
    <name evidence="4" type="primary">RPH1</name>
    <name evidence="5" type="ordered locus">At2g48070</name>
    <name evidence="6" type="ORF">T9J23.22</name>
</gene>
<protein>
    <recommendedName>
        <fullName evidence="4">Protein RESISTANCE TO PHYTOPHTHORA 1, chloroplastic</fullName>
        <shortName evidence="4">AtRPH1</shortName>
    </recommendedName>
</protein>
<organism>
    <name type="scientific">Arabidopsis thaliana</name>
    <name type="common">Mouse-ear cress</name>
    <dbReference type="NCBI Taxonomy" id="3702"/>
    <lineage>
        <taxon>Eukaryota</taxon>
        <taxon>Viridiplantae</taxon>
        <taxon>Streptophyta</taxon>
        <taxon>Embryophyta</taxon>
        <taxon>Tracheophyta</taxon>
        <taxon>Spermatophyta</taxon>
        <taxon>Magnoliopsida</taxon>
        <taxon>eudicotyledons</taxon>
        <taxon>Gunneridae</taxon>
        <taxon>Pentapetalae</taxon>
        <taxon>rosids</taxon>
        <taxon>malvids</taxon>
        <taxon>Brassicales</taxon>
        <taxon>Brassicaceae</taxon>
        <taxon>Camelineae</taxon>
        <taxon>Arabidopsis</taxon>
    </lineage>
</organism>
<keyword id="KW-0150">Chloroplast</keyword>
<keyword id="KW-0472">Membrane</keyword>
<keyword id="KW-0611">Plant defense</keyword>
<keyword id="KW-0934">Plastid</keyword>
<keyword id="KW-1185">Reference proteome</keyword>
<keyword id="KW-0809">Transit peptide</keyword>
<keyword id="KW-0812">Transmembrane</keyword>
<keyword id="KW-1133">Transmembrane helix</keyword>
<name>RPH1_ARATH</name>
<sequence>MSWSLCSTHGVSSSIALTYGFRHRRRSTFRIFATSDGLEPKDDPPESPLPSSSSALGKDLKKVVNKTAATFAPRASTASKNPALPGTTLYKVFEVQGYASMFLGGVLSFNLLFPSSEPDLWRLMGMWSIWMFTIPSLRARDCPSKEKEALNYLFLIVPLLNVAIPFFWKSFALVWSADTVAFFAMYAWKLGWLERTE</sequence>
<feature type="transit peptide" description="Chloroplast" evidence="1">
    <location>
        <begin position="1"/>
        <end position="52"/>
    </location>
</feature>
<feature type="chain" id="PRO_0000445599" description="Protein RESISTANCE TO PHYTOPHTHORA 1, chloroplastic">
    <location>
        <begin position="53"/>
        <end position="197"/>
    </location>
</feature>
<feature type="transmembrane region" description="Helical" evidence="1">
    <location>
        <begin position="93"/>
        <end position="113"/>
    </location>
</feature>
<feature type="transmembrane region" description="Helical" evidence="1">
    <location>
        <begin position="120"/>
        <end position="140"/>
    </location>
</feature>
<feature type="transmembrane region" description="Helical" evidence="1">
    <location>
        <begin position="150"/>
        <end position="170"/>
    </location>
</feature>
<feature type="transmembrane region" description="Helical" evidence="1">
    <location>
        <begin position="173"/>
        <end position="193"/>
    </location>
</feature>
<feature type="region of interest" description="Disordered" evidence="2">
    <location>
        <begin position="35"/>
        <end position="56"/>
    </location>
</feature>
<proteinExistence type="evidence at transcript level"/>
<evidence type="ECO:0000255" key="1"/>
<evidence type="ECO:0000256" key="2">
    <source>
        <dbReference type="SAM" id="MobiDB-lite"/>
    </source>
</evidence>
<evidence type="ECO:0000269" key="3">
    <source>
    </source>
</evidence>
<evidence type="ECO:0000303" key="4">
    <source>
    </source>
</evidence>
<evidence type="ECO:0000312" key="5">
    <source>
        <dbReference type="Araport" id="AT2G48070"/>
    </source>
</evidence>
<evidence type="ECO:0000312" key="6">
    <source>
        <dbReference type="EMBL" id="AAD13710.2"/>
    </source>
</evidence>
<comment type="function">
    <text evidence="3">Plays a positive role in the immune response to the oomycetes P.brassicae, including induced oxidative burst (e.g. H(2)O(2)) and enhanced expression of defense-related genes.</text>
</comment>
<comment type="subcellular location">
    <subcellularLocation>
        <location evidence="3">Plastid</location>
        <location evidence="3">Chloroplast</location>
    </subcellularLocation>
    <subcellularLocation>
        <location evidence="1">Membrane</location>
        <topology evidence="1">Multi-pass membrane protein</topology>
    </subcellularLocation>
</comment>
<comment type="disruption phenotype">
    <text evidence="3">Small plants with reduced chlorophyll content. Susceptiblility to the oomycete pathogen P.brassicae despite recognition and rapid induction of hypersensitive response (HR) but associated with a reduced oxidative burst (e.g. H(2)O(2)), a runaway cell-death response, and specific deficiencies in the expression of established markers of immune and stress hormone signaling (e.g. PR1, PDF1.2, AIG1, EDS1 and PAD4). Normal susceptibility to virulent and avirulent isolates of the oomycete H.arabidopsis, to virulent and avirulent isolates of the bacterial pathogen P.syringae, and to the fungal pathogen B.cinerea.</text>
</comment>
<accession>Q9ZU82</accession>
<accession>Q94AU8</accession>
<reference key="1">
    <citation type="journal article" date="1999" name="Nature">
        <title>Sequence and analysis of chromosome 2 of the plant Arabidopsis thaliana.</title>
        <authorList>
            <person name="Lin X."/>
            <person name="Kaul S."/>
            <person name="Rounsley S.D."/>
            <person name="Shea T.P."/>
            <person name="Benito M.-I."/>
            <person name="Town C.D."/>
            <person name="Fujii C.Y."/>
            <person name="Mason T.M."/>
            <person name="Bowman C.L."/>
            <person name="Barnstead M.E."/>
            <person name="Feldblyum T.V."/>
            <person name="Buell C.R."/>
            <person name="Ketchum K.A."/>
            <person name="Lee J.J."/>
            <person name="Ronning C.M."/>
            <person name="Koo H.L."/>
            <person name="Moffat K.S."/>
            <person name="Cronin L.A."/>
            <person name="Shen M."/>
            <person name="Pai G."/>
            <person name="Van Aken S."/>
            <person name="Umayam L."/>
            <person name="Tallon L.J."/>
            <person name="Gill J.E."/>
            <person name="Adams M.D."/>
            <person name="Carrera A.J."/>
            <person name="Creasy T.H."/>
            <person name="Goodman H.M."/>
            <person name="Somerville C.R."/>
            <person name="Copenhaver G.P."/>
            <person name="Preuss D."/>
            <person name="Nierman W.C."/>
            <person name="White O."/>
            <person name="Eisen J.A."/>
            <person name="Salzberg S.L."/>
            <person name="Fraser C.M."/>
            <person name="Venter J.C."/>
        </authorList>
    </citation>
    <scope>NUCLEOTIDE SEQUENCE [LARGE SCALE GENOMIC DNA]</scope>
    <source>
        <strain>cv. Columbia</strain>
    </source>
</reference>
<reference key="2">
    <citation type="journal article" date="2017" name="Plant J.">
        <title>Araport11: a complete reannotation of the Arabidopsis thaliana reference genome.</title>
        <authorList>
            <person name="Cheng C.Y."/>
            <person name="Krishnakumar V."/>
            <person name="Chan A.P."/>
            <person name="Thibaud-Nissen F."/>
            <person name="Schobel S."/>
            <person name="Town C.D."/>
        </authorList>
    </citation>
    <scope>GENOME REANNOTATION</scope>
    <source>
        <strain>cv. Columbia</strain>
    </source>
</reference>
<reference key="3">
    <citation type="journal article" date="2003" name="Science">
        <title>Empirical analysis of transcriptional activity in the Arabidopsis genome.</title>
        <authorList>
            <person name="Yamada K."/>
            <person name="Lim J."/>
            <person name="Dale J.M."/>
            <person name="Chen H."/>
            <person name="Shinn P."/>
            <person name="Palm C.J."/>
            <person name="Southwick A.M."/>
            <person name="Wu H.C."/>
            <person name="Kim C.J."/>
            <person name="Nguyen M."/>
            <person name="Pham P.K."/>
            <person name="Cheuk R.F."/>
            <person name="Karlin-Newmann G."/>
            <person name="Liu S.X."/>
            <person name="Lam B."/>
            <person name="Sakano H."/>
            <person name="Wu T."/>
            <person name="Yu G."/>
            <person name="Miranda M."/>
            <person name="Quach H.L."/>
            <person name="Tripp M."/>
            <person name="Chang C.H."/>
            <person name="Lee J.M."/>
            <person name="Toriumi M.J."/>
            <person name="Chan M.M."/>
            <person name="Tang C.C."/>
            <person name="Onodera C.S."/>
            <person name="Deng J.M."/>
            <person name="Akiyama K."/>
            <person name="Ansari Y."/>
            <person name="Arakawa T."/>
            <person name="Banh J."/>
            <person name="Banno F."/>
            <person name="Bowser L."/>
            <person name="Brooks S.Y."/>
            <person name="Carninci P."/>
            <person name="Chao Q."/>
            <person name="Choy N."/>
            <person name="Enju A."/>
            <person name="Goldsmith A.D."/>
            <person name="Gurjal M."/>
            <person name="Hansen N.F."/>
            <person name="Hayashizaki Y."/>
            <person name="Johnson-Hopson C."/>
            <person name="Hsuan V.W."/>
            <person name="Iida K."/>
            <person name="Karnes M."/>
            <person name="Khan S."/>
            <person name="Koesema E."/>
            <person name="Ishida J."/>
            <person name="Jiang P.X."/>
            <person name="Jones T."/>
            <person name="Kawai J."/>
            <person name="Kamiya A."/>
            <person name="Meyers C."/>
            <person name="Nakajima M."/>
            <person name="Narusaka M."/>
            <person name="Seki M."/>
            <person name="Sakurai T."/>
            <person name="Satou M."/>
            <person name="Tamse R."/>
            <person name="Vaysberg M."/>
            <person name="Wallender E.K."/>
            <person name="Wong C."/>
            <person name="Yamamura Y."/>
            <person name="Yuan S."/>
            <person name="Shinozaki K."/>
            <person name="Davis R.W."/>
            <person name="Theologis A."/>
            <person name="Ecker J.R."/>
        </authorList>
    </citation>
    <scope>NUCLEOTIDE SEQUENCE [LARGE SCALE MRNA]</scope>
    <source>
        <strain>cv. Columbia</strain>
    </source>
</reference>
<reference key="4">
    <citation type="journal article" date="2009" name="Plant J.">
        <title>The chloroplast protein RPH1 plays a role in the immune response of Arabidopsis to Phytophthora brassicae.</title>
        <authorList>
            <person name="Belhaj K."/>
            <person name="Lin B."/>
            <person name="Mauch F."/>
        </authorList>
    </citation>
    <scope>FUNCTION</scope>
    <scope>DISRUPTION PHENOTYPE</scope>
    <scope>SUBCELLULAR LOCATION</scope>
    <source>
        <strain>cv. Columbia</strain>
        <strain>cv. Wassilewskija</strain>
    </source>
</reference>